<evidence type="ECO:0000255" key="1">
    <source>
        <dbReference type="HAMAP-Rule" id="MF_00661"/>
    </source>
</evidence>
<evidence type="ECO:0000256" key="2">
    <source>
        <dbReference type="SAM" id="MobiDB-lite"/>
    </source>
</evidence>
<proteinExistence type="inferred from homology"/>
<feature type="chain" id="PRO_1000131288" description="ATP-dependent RNA helicase RhlB">
    <location>
        <begin position="1"/>
        <end position="421"/>
    </location>
</feature>
<feature type="domain" description="Helicase ATP-binding" evidence="1">
    <location>
        <begin position="40"/>
        <end position="219"/>
    </location>
</feature>
<feature type="domain" description="Helicase C-terminal" evidence="1">
    <location>
        <begin position="245"/>
        <end position="390"/>
    </location>
</feature>
<feature type="region of interest" description="Disordered" evidence="2">
    <location>
        <begin position="392"/>
        <end position="421"/>
    </location>
</feature>
<feature type="short sequence motif" description="Q motif">
    <location>
        <begin position="9"/>
        <end position="37"/>
    </location>
</feature>
<feature type="short sequence motif" description="DEAD box">
    <location>
        <begin position="165"/>
        <end position="168"/>
    </location>
</feature>
<feature type="compositionally biased region" description="Low complexity" evidence="2">
    <location>
        <begin position="402"/>
        <end position="414"/>
    </location>
</feature>
<feature type="binding site" evidence="1">
    <location>
        <begin position="53"/>
        <end position="60"/>
    </location>
    <ligand>
        <name>ATP</name>
        <dbReference type="ChEBI" id="CHEBI:30616"/>
    </ligand>
</feature>
<organism>
    <name type="scientific">Escherichia coli O7:K1 (strain IAI39 / ExPEC)</name>
    <dbReference type="NCBI Taxonomy" id="585057"/>
    <lineage>
        <taxon>Bacteria</taxon>
        <taxon>Pseudomonadati</taxon>
        <taxon>Pseudomonadota</taxon>
        <taxon>Gammaproteobacteria</taxon>
        <taxon>Enterobacterales</taxon>
        <taxon>Enterobacteriaceae</taxon>
        <taxon>Escherichia</taxon>
    </lineage>
</organism>
<keyword id="KW-0067">ATP-binding</keyword>
<keyword id="KW-0963">Cytoplasm</keyword>
<keyword id="KW-0347">Helicase</keyword>
<keyword id="KW-0378">Hydrolase</keyword>
<keyword id="KW-0547">Nucleotide-binding</keyword>
<keyword id="KW-0694">RNA-binding</keyword>
<gene>
    <name evidence="1" type="primary">rhlB</name>
    <name type="ordered locus">ECIAI39_3007</name>
</gene>
<protein>
    <recommendedName>
        <fullName evidence="1">ATP-dependent RNA helicase RhlB</fullName>
        <ecNumber evidence="1">3.6.4.13</ecNumber>
    </recommendedName>
</protein>
<reference key="1">
    <citation type="journal article" date="2009" name="PLoS Genet.">
        <title>Organised genome dynamics in the Escherichia coli species results in highly diverse adaptive paths.</title>
        <authorList>
            <person name="Touchon M."/>
            <person name="Hoede C."/>
            <person name="Tenaillon O."/>
            <person name="Barbe V."/>
            <person name="Baeriswyl S."/>
            <person name="Bidet P."/>
            <person name="Bingen E."/>
            <person name="Bonacorsi S."/>
            <person name="Bouchier C."/>
            <person name="Bouvet O."/>
            <person name="Calteau A."/>
            <person name="Chiapello H."/>
            <person name="Clermont O."/>
            <person name="Cruveiller S."/>
            <person name="Danchin A."/>
            <person name="Diard M."/>
            <person name="Dossat C."/>
            <person name="Karoui M.E."/>
            <person name="Frapy E."/>
            <person name="Garry L."/>
            <person name="Ghigo J.M."/>
            <person name="Gilles A.M."/>
            <person name="Johnson J."/>
            <person name="Le Bouguenec C."/>
            <person name="Lescat M."/>
            <person name="Mangenot S."/>
            <person name="Martinez-Jehanne V."/>
            <person name="Matic I."/>
            <person name="Nassif X."/>
            <person name="Oztas S."/>
            <person name="Petit M.A."/>
            <person name="Pichon C."/>
            <person name="Rouy Z."/>
            <person name="Ruf C.S."/>
            <person name="Schneider D."/>
            <person name="Tourret J."/>
            <person name="Vacherie B."/>
            <person name="Vallenet D."/>
            <person name="Medigue C."/>
            <person name="Rocha E.P.C."/>
            <person name="Denamur E."/>
        </authorList>
    </citation>
    <scope>NUCLEOTIDE SEQUENCE [LARGE SCALE GENOMIC DNA]</scope>
    <source>
        <strain>IAI39 / ExPEC</strain>
    </source>
</reference>
<dbReference type="EC" id="3.6.4.13" evidence="1"/>
<dbReference type="EMBL" id="CU928164">
    <property type="protein sequence ID" value="CAR19126.1"/>
    <property type="molecule type" value="Genomic_DNA"/>
</dbReference>
<dbReference type="RefSeq" id="WP_000047509.1">
    <property type="nucleotide sequence ID" value="NC_011750.1"/>
</dbReference>
<dbReference type="RefSeq" id="YP_002408936.1">
    <property type="nucleotide sequence ID" value="NC_011750.1"/>
</dbReference>
<dbReference type="SMR" id="B7NTG2"/>
<dbReference type="STRING" id="585057.ECIAI39_3007"/>
<dbReference type="KEGG" id="ect:ECIAI39_3007"/>
<dbReference type="PATRIC" id="fig|585057.6.peg.3120"/>
<dbReference type="HOGENOM" id="CLU_003041_1_3_6"/>
<dbReference type="Proteomes" id="UP000000749">
    <property type="component" value="Chromosome"/>
</dbReference>
<dbReference type="GO" id="GO:0005829">
    <property type="term" value="C:cytosol"/>
    <property type="evidence" value="ECO:0007669"/>
    <property type="project" value="TreeGrafter"/>
</dbReference>
<dbReference type="GO" id="GO:0005524">
    <property type="term" value="F:ATP binding"/>
    <property type="evidence" value="ECO:0007669"/>
    <property type="project" value="UniProtKB-UniRule"/>
</dbReference>
<dbReference type="GO" id="GO:0016887">
    <property type="term" value="F:ATP hydrolysis activity"/>
    <property type="evidence" value="ECO:0007669"/>
    <property type="project" value="RHEA"/>
</dbReference>
<dbReference type="GO" id="GO:0003723">
    <property type="term" value="F:RNA binding"/>
    <property type="evidence" value="ECO:0007669"/>
    <property type="project" value="UniProtKB-UniRule"/>
</dbReference>
<dbReference type="GO" id="GO:0003724">
    <property type="term" value="F:RNA helicase activity"/>
    <property type="evidence" value="ECO:0007669"/>
    <property type="project" value="UniProtKB-UniRule"/>
</dbReference>
<dbReference type="GO" id="GO:0006401">
    <property type="term" value="P:RNA catabolic process"/>
    <property type="evidence" value="ECO:0007669"/>
    <property type="project" value="UniProtKB-UniRule"/>
</dbReference>
<dbReference type="CDD" id="cd00268">
    <property type="entry name" value="DEADc"/>
    <property type="match status" value="1"/>
</dbReference>
<dbReference type="CDD" id="cd18787">
    <property type="entry name" value="SF2_C_DEAD"/>
    <property type="match status" value="1"/>
</dbReference>
<dbReference type="FunFam" id="3.40.50.300:FF:000008">
    <property type="entry name" value="ATP-dependent RNA helicase RhlB"/>
    <property type="match status" value="1"/>
</dbReference>
<dbReference type="FunFam" id="3.40.50.300:FF:000312">
    <property type="entry name" value="ATP-dependent RNA helicase RhlB"/>
    <property type="match status" value="1"/>
</dbReference>
<dbReference type="Gene3D" id="3.40.50.300">
    <property type="entry name" value="P-loop containing nucleotide triphosphate hydrolases"/>
    <property type="match status" value="2"/>
</dbReference>
<dbReference type="HAMAP" id="MF_00661">
    <property type="entry name" value="DEAD_helicase_RhlB"/>
    <property type="match status" value="1"/>
</dbReference>
<dbReference type="InterPro" id="IPR011545">
    <property type="entry name" value="DEAD/DEAH_box_helicase_dom"/>
</dbReference>
<dbReference type="InterPro" id="IPR050079">
    <property type="entry name" value="DEAD_box_RNA_helicase"/>
</dbReference>
<dbReference type="InterPro" id="IPR014001">
    <property type="entry name" value="Helicase_ATP-bd"/>
</dbReference>
<dbReference type="InterPro" id="IPR001650">
    <property type="entry name" value="Helicase_C-like"/>
</dbReference>
<dbReference type="InterPro" id="IPR027417">
    <property type="entry name" value="P-loop_NTPase"/>
</dbReference>
<dbReference type="InterPro" id="IPR000629">
    <property type="entry name" value="RNA-helicase_DEAD-box_CS"/>
</dbReference>
<dbReference type="InterPro" id="IPR023554">
    <property type="entry name" value="RNA_helicase_ATP-dep_RhlB"/>
</dbReference>
<dbReference type="InterPro" id="IPR014014">
    <property type="entry name" value="RNA_helicase_DEAD_Q_motif"/>
</dbReference>
<dbReference type="NCBIfam" id="NF003419">
    <property type="entry name" value="PRK04837.1"/>
    <property type="match status" value="1"/>
</dbReference>
<dbReference type="PANTHER" id="PTHR47959:SF10">
    <property type="entry name" value="ATP-DEPENDENT RNA HELICASE RHLB"/>
    <property type="match status" value="1"/>
</dbReference>
<dbReference type="PANTHER" id="PTHR47959">
    <property type="entry name" value="ATP-DEPENDENT RNA HELICASE RHLE-RELATED"/>
    <property type="match status" value="1"/>
</dbReference>
<dbReference type="Pfam" id="PF00270">
    <property type="entry name" value="DEAD"/>
    <property type="match status" value="1"/>
</dbReference>
<dbReference type="Pfam" id="PF00271">
    <property type="entry name" value="Helicase_C"/>
    <property type="match status" value="1"/>
</dbReference>
<dbReference type="SMART" id="SM00487">
    <property type="entry name" value="DEXDc"/>
    <property type="match status" value="1"/>
</dbReference>
<dbReference type="SMART" id="SM00490">
    <property type="entry name" value="HELICc"/>
    <property type="match status" value="1"/>
</dbReference>
<dbReference type="SUPFAM" id="SSF52540">
    <property type="entry name" value="P-loop containing nucleoside triphosphate hydrolases"/>
    <property type="match status" value="1"/>
</dbReference>
<dbReference type="PROSITE" id="PS00039">
    <property type="entry name" value="DEAD_ATP_HELICASE"/>
    <property type="match status" value="1"/>
</dbReference>
<dbReference type="PROSITE" id="PS51192">
    <property type="entry name" value="HELICASE_ATP_BIND_1"/>
    <property type="match status" value="1"/>
</dbReference>
<dbReference type="PROSITE" id="PS51194">
    <property type="entry name" value="HELICASE_CTER"/>
    <property type="match status" value="1"/>
</dbReference>
<dbReference type="PROSITE" id="PS51195">
    <property type="entry name" value="Q_MOTIF"/>
    <property type="match status" value="1"/>
</dbReference>
<comment type="function">
    <text evidence="1">DEAD-box RNA helicase involved in RNA degradation. Has RNA-dependent ATPase activity and unwinds double-stranded RNA.</text>
</comment>
<comment type="catalytic activity">
    <reaction evidence="1">
        <text>ATP + H2O = ADP + phosphate + H(+)</text>
        <dbReference type="Rhea" id="RHEA:13065"/>
        <dbReference type="ChEBI" id="CHEBI:15377"/>
        <dbReference type="ChEBI" id="CHEBI:15378"/>
        <dbReference type="ChEBI" id="CHEBI:30616"/>
        <dbReference type="ChEBI" id="CHEBI:43474"/>
        <dbReference type="ChEBI" id="CHEBI:456216"/>
        <dbReference type="EC" id="3.6.4.13"/>
    </reaction>
</comment>
<comment type="subunit">
    <text evidence="1">Component of the RNA degradosome, which is a multiprotein complex involved in RNA processing and mRNA degradation.</text>
</comment>
<comment type="subcellular location">
    <subcellularLocation>
        <location evidence="1">Cytoplasm</location>
    </subcellularLocation>
</comment>
<comment type="similarity">
    <text evidence="1">Belongs to the DEAD box helicase family. RhlB subfamily.</text>
</comment>
<accession>B7NTG2</accession>
<sequence>MSKTHLTEQKFSDFALHPKVVEALEKKGFHNCTPIQALALPLTLAGRDVAGQAQTGTGKTMAFLTSTFHYLLSHPAIADRKVNQPRALIMAPTRELAVQIHADAEPLAQATGLKLGLAYGGDGYDKQLKVLESGVDILIGTTGRLIDYAKQNHINLGAIQVVVLDEADRMYDLGFIKDIRWLFRRMPPANQRLNMLFSATLSYRVRELAFEQMNNAEYIEVEPEQKTGHRIKEELFYPSNEEKMRLLQTLIEEEWPDRAIIFANTKHRCEEIWGHLAADGHRVGLLTGDVAQKKRLRILDEFTRGDLDILVATDVAARGLHIPAVTHVFNYDLPDDCEDYVHRIGRTGRAGASGHSISLACEEYALNLPAIETYIGHSIPVSKYNPDALMTDLPKPLRLTRPRTGNGPRRTGTPRNRRRSG</sequence>
<name>RHLB_ECO7I</name>